<name>AAC6C_SERMA</name>
<proteinExistence type="evidence at protein level"/>
<keyword id="KW-0012">Acyltransferase</keyword>
<keyword id="KW-0046">Antibiotic resistance</keyword>
<keyword id="KW-0808">Transferase</keyword>
<protein>
    <recommendedName>
        <fullName evidence="5 7">Aminoglycoside N(6')-acetyltransferase type 1</fullName>
        <ecNumber evidence="4">2.3.1.82</ecNumber>
    </recommendedName>
    <alternativeName>
        <fullName evidence="7">AAC(6')-Ic</fullName>
    </alternativeName>
    <alternativeName>
        <fullName evidence="1">Aminoglycoside resistance protein</fullName>
    </alternativeName>
</protein>
<feature type="chain" id="PRO_0000416834" description="Aminoglycoside N(6')-acetyltransferase type 1">
    <location>
        <begin position="1"/>
        <end position="146"/>
    </location>
</feature>
<feature type="domain" description="N-acetyltransferase" evidence="3">
    <location>
        <begin position="1"/>
        <end position="146"/>
    </location>
</feature>
<feature type="binding site" evidence="2">
    <location>
        <position position="21"/>
    </location>
    <ligand>
        <name>substrate</name>
    </ligand>
</feature>
<feature type="binding site" evidence="2">
    <location>
        <position position="66"/>
    </location>
    <ligand>
        <name>substrate</name>
    </ligand>
</feature>
<feature type="binding site" evidence="2">
    <location>
        <position position="79"/>
    </location>
    <ligand>
        <name>substrate</name>
    </ligand>
</feature>
<feature type="binding site" evidence="2">
    <location>
        <position position="115"/>
    </location>
    <ligand>
        <name>substrate</name>
    </ligand>
</feature>
<feature type="binding site" evidence="2">
    <location>
        <position position="120"/>
    </location>
    <ligand>
        <name>acetyl-CoA</name>
        <dbReference type="ChEBI" id="CHEBI:57288"/>
    </ligand>
</feature>
<feature type="binding site" evidence="2">
    <location>
        <position position="136"/>
    </location>
    <ligand>
        <name>substrate</name>
    </ligand>
</feature>
<comment type="function">
    <text evidence="4">Catalyzes the transfer of an acetyl group from acetyl-CoA to the 6'-amino group of aminoglycoside molecules conferring resistance to antibiotics containing the purpurosamine ring including amikacin, tobramycin, netilmicin, isepamicin and sisomicin.</text>
</comment>
<comment type="catalytic activity">
    <reaction evidence="4">
        <text>kanamycin B + acetyl-CoA = N(6')-acetylkanamycin B + CoA + H(+)</text>
        <dbReference type="Rhea" id="RHEA:16449"/>
        <dbReference type="ChEBI" id="CHEBI:15378"/>
        <dbReference type="ChEBI" id="CHEBI:57287"/>
        <dbReference type="ChEBI" id="CHEBI:57288"/>
        <dbReference type="ChEBI" id="CHEBI:58390"/>
        <dbReference type="ChEBI" id="CHEBI:58549"/>
        <dbReference type="EC" id="2.3.1.82"/>
    </reaction>
</comment>
<comment type="subunit">
    <text evidence="2">Homodimer.</text>
</comment>
<accession>Q54441</accession>
<sequence>MIVICDHDNLDAWLALRTALWPSGSPEDHRAEMREILASPHHTAFMARGLDGAFVAFAEVALRYDYVNGCESSPVAFLEGIYTAERARRQGWAARLIAQVQEWAKQQGCSELASDTDIANLDSQRLHAALGFAETERVVFYRKTLG</sequence>
<organism>
    <name type="scientific">Serratia marcescens</name>
    <dbReference type="NCBI Taxonomy" id="615"/>
    <lineage>
        <taxon>Bacteria</taxon>
        <taxon>Pseudomonadati</taxon>
        <taxon>Pseudomonadota</taxon>
        <taxon>Gammaproteobacteria</taxon>
        <taxon>Enterobacterales</taxon>
        <taxon>Yersiniaceae</taxon>
        <taxon>Serratia</taxon>
    </lineage>
</organism>
<reference evidence="6 7" key="1">
    <citation type="journal article" date="1992" name="Antimicrob. Agents Chemother.">
        <title>Characterization of the chromosomal aac(6')-Ic gene from Serratia marcescens.</title>
        <authorList>
            <person name="Shaw K.J."/>
            <person name="Rather P.N."/>
            <person name="Sabatelli F.J."/>
            <person name="Mann P."/>
            <person name="Munayyer H."/>
            <person name="Mierzwa R."/>
            <person name="Petrikkos G.L."/>
            <person name="Hare R.S."/>
            <person name="Miller G.H."/>
            <person name="Bennett P."/>
        </authorList>
    </citation>
    <scope>NUCLEOTIDE SEQUENCE [GENOMIC DNA]</scope>
    <scope>FUNCTION</scope>
    <scope>CATALYTIC ACTIVITY</scope>
    <scope>SUBSTRATE SPECIFICITY</scope>
    <source>
        <strain evidence="4">SM16</strain>
    </source>
</reference>
<dbReference type="EC" id="2.3.1.82" evidence="4"/>
<dbReference type="EMBL" id="M94066">
    <property type="protein sequence ID" value="AAA26549.1"/>
    <property type="molecule type" value="Genomic_DNA"/>
</dbReference>
<dbReference type="PIR" id="A48897">
    <property type="entry name" value="A48897"/>
</dbReference>
<dbReference type="RefSeq" id="WP_033649026.1">
    <property type="nucleotide sequence ID" value="NZ_VKXL01000008.1"/>
</dbReference>
<dbReference type="SMR" id="Q54441"/>
<dbReference type="STRING" id="273526.SMDB11_3538"/>
<dbReference type="CARD" id="ARO:3002549">
    <property type="molecule name" value="AAC(6')-Ic"/>
    <property type="mechanism identifier" value="ARO:0001004"/>
    <property type="mechanism name" value="antibiotic inactivation"/>
</dbReference>
<dbReference type="KEGG" id="ag:AAA26549"/>
<dbReference type="GO" id="GO:0047663">
    <property type="term" value="F:aminoglycoside 6'-N-acetyltransferase activity"/>
    <property type="evidence" value="ECO:0000314"/>
    <property type="project" value="UniProtKB"/>
</dbReference>
<dbReference type="GO" id="GO:0046677">
    <property type="term" value="P:response to antibiotic"/>
    <property type="evidence" value="ECO:0000314"/>
    <property type="project" value="UniProtKB"/>
</dbReference>
<dbReference type="CDD" id="cd04301">
    <property type="entry name" value="NAT_SF"/>
    <property type="match status" value="1"/>
</dbReference>
<dbReference type="Gene3D" id="3.40.630.30">
    <property type="match status" value="1"/>
</dbReference>
<dbReference type="InterPro" id="IPR016181">
    <property type="entry name" value="Acyl_CoA_acyltransferase"/>
</dbReference>
<dbReference type="InterPro" id="IPR024170">
    <property type="entry name" value="Aminoglycoside_N6-AcTrfrase"/>
</dbReference>
<dbReference type="InterPro" id="IPR050832">
    <property type="entry name" value="Bact_Acetyltransf"/>
</dbReference>
<dbReference type="InterPro" id="IPR000182">
    <property type="entry name" value="GNAT_dom"/>
</dbReference>
<dbReference type="NCBIfam" id="NF043067">
    <property type="entry name" value="AAC_6p_group_E"/>
    <property type="match status" value="1"/>
</dbReference>
<dbReference type="NCBIfam" id="NF000021">
    <property type="entry name" value="AAC_6p_Serra"/>
    <property type="match status" value="1"/>
</dbReference>
<dbReference type="PANTHER" id="PTHR43877">
    <property type="entry name" value="AMINOALKYLPHOSPHONATE N-ACETYLTRANSFERASE-RELATED-RELATED"/>
    <property type="match status" value="1"/>
</dbReference>
<dbReference type="Pfam" id="PF00583">
    <property type="entry name" value="Acetyltransf_1"/>
    <property type="match status" value="1"/>
</dbReference>
<dbReference type="PIRSF" id="PIRSF000452">
    <property type="entry name" value="6-N-acetyltransf"/>
    <property type="match status" value="1"/>
</dbReference>
<dbReference type="SUPFAM" id="SSF55729">
    <property type="entry name" value="Acyl-CoA N-acyltransferases (Nat)"/>
    <property type="match status" value="1"/>
</dbReference>
<dbReference type="PROSITE" id="PS51186">
    <property type="entry name" value="GNAT"/>
    <property type="match status" value="1"/>
</dbReference>
<evidence type="ECO:0000250" key="1">
    <source>
        <dbReference type="UniProtKB" id="P50858"/>
    </source>
</evidence>
<evidence type="ECO:0000250" key="2">
    <source>
        <dbReference type="UniProtKB" id="Q9R381"/>
    </source>
</evidence>
<evidence type="ECO:0000255" key="3">
    <source>
        <dbReference type="PROSITE-ProRule" id="PRU00532"/>
    </source>
</evidence>
<evidence type="ECO:0000269" key="4">
    <source>
    </source>
</evidence>
<evidence type="ECO:0000303" key="5">
    <source>
    </source>
</evidence>
<evidence type="ECO:0000305" key="6"/>
<evidence type="ECO:0000312" key="7">
    <source>
        <dbReference type="EMBL" id="AAA26549.1"/>
    </source>
</evidence>